<sequence>MTLDTVTPRTNLLGLTREEMESFFVSLGEKKFRAAQVMKWIHHEGCADFASMTNLSKALRTRLEELAEIRGPRVVYEGTSQDGTRKWVLEVEDGSYVETVLIPAEGGKRRTLCVSSQVGCSLDCSFCSTGKQGFQRNLTSAEIIGQVWVASNSFGARRDTTNRPVTNVVMMGMGEPLLNYDNVVPAMKLMLDDNGYGLSKRRVTLSTSGVVPKLDQLGDELDVSLAVSLHAANDELRNELVPLNRKYNIATLLDACRRYLAKCDDTRMLTIEYTLIKDVNDQQHHAEELAALLADLPSKINLIPFNPFPHSGYEKPSRNQVMRFQQWLYDLGYTALVRTTRGDDIDAACGQLVGRVKDRTKRHERYIQSIQLDAD</sequence>
<gene>
    <name evidence="1" type="primary">rlmN</name>
    <name type="ordered locus">Csal_2851</name>
</gene>
<feature type="chain" id="PRO_0000350108" description="Dual-specificity RNA methyltransferase RlmN">
    <location>
        <begin position="1"/>
        <end position="375"/>
    </location>
</feature>
<feature type="domain" description="Radical SAM core" evidence="2">
    <location>
        <begin position="106"/>
        <end position="346"/>
    </location>
</feature>
<feature type="active site" description="Proton acceptor" evidence="1">
    <location>
        <position position="98"/>
    </location>
</feature>
<feature type="active site" description="S-methylcysteine intermediate" evidence="1">
    <location>
        <position position="349"/>
    </location>
</feature>
<feature type="binding site" evidence="1">
    <location>
        <position position="120"/>
    </location>
    <ligand>
        <name>[4Fe-4S] cluster</name>
        <dbReference type="ChEBI" id="CHEBI:49883"/>
        <note>4Fe-4S-S-AdoMet</note>
    </ligand>
</feature>
<feature type="binding site" evidence="1">
    <location>
        <position position="124"/>
    </location>
    <ligand>
        <name>[4Fe-4S] cluster</name>
        <dbReference type="ChEBI" id="CHEBI:49883"/>
        <note>4Fe-4S-S-AdoMet</note>
    </ligand>
</feature>
<feature type="binding site" evidence="1">
    <location>
        <position position="127"/>
    </location>
    <ligand>
        <name>[4Fe-4S] cluster</name>
        <dbReference type="ChEBI" id="CHEBI:49883"/>
        <note>4Fe-4S-S-AdoMet</note>
    </ligand>
</feature>
<feature type="binding site" evidence="1">
    <location>
        <begin position="174"/>
        <end position="175"/>
    </location>
    <ligand>
        <name>S-adenosyl-L-methionine</name>
        <dbReference type="ChEBI" id="CHEBI:59789"/>
    </ligand>
</feature>
<feature type="binding site" evidence="1">
    <location>
        <position position="206"/>
    </location>
    <ligand>
        <name>S-adenosyl-L-methionine</name>
        <dbReference type="ChEBI" id="CHEBI:59789"/>
    </ligand>
</feature>
<feature type="binding site" evidence="1">
    <location>
        <begin position="228"/>
        <end position="230"/>
    </location>
    <ligand>
        <name>S-adenosyl-L-methionine</name>
        <dbReference type="ChEBI" id="CHEBI:59789"/>
    </ligand>
</feature>
<feature type="binding site" evidence="1">
    <location>
        <position position="306"/>
    </location>
    <ligand>
        <name>S-adenosyl-L-methionine</name>
        <dbReference type="ChEBI" id="CHEBI:59789"/>
    </ligand>
</feature>
<feature type="disulfide bond" description="(transient)" evidence="1">
    <location>
        <begin position="113"/>
        <end position="349"/>
    </location>
</feature>
<dbReference type="EC" id="2.1.1.192" evidence="1"/>
<dbReference type="EMBL" id="CP000285">
    <property type="protein sequence ID" value="ABE60197.1"/>
    <property type="molecule type" value="Genomic_DNA"/>
</dbReference>
<dbReference type="RefSeq" id="WP_011508143.1">
    <property type="nucleotide sequence ID" value="NC_007963.1"/>
</dbReference>
<dbReference type="SMR" id="Q1QTL1"/>
<dbReference type="STRING" id="290398.Csal_2851"/>
<dbReference type="GeneID" id="95335546"/>
<dbReference type="KEGG" id="csa:Csal_2851"/>
<dbReference type="eggNOG" id="COG0820">
    <property type="taxonomic scope" value="Bacteria"/>
</dbReference>
<dbReference type="HOGENOM" id="CLU_029101_0_0_6"/>
<dbReference type="OrthoDB" id="9793973at2"/>
<dbReference type="Proteomes" id="UP000000239">
    <property type="component" value="Chromosome"/>
</dbReference>
<dbReference type="GO" id="GO:0005737">
    <property type="term" value="C:cytoplasm"/>
    <property type="evidence" value="ECO:0007669"/>
    <property type="project" value="UniProtKB-SubCell"/>
</dbReference>
<dbReference type="GO" id="GO:0051539">
    <property type="term" value="F:4 iron, 4 sulfur cluster binding"/>
    <property type="evidence" value="ECO:0007669"/>
    <property type="project" value="UniProtKB-UniRule"/>
</dbReference>
<dbReference type="GO" id="GO:0046872">
    <property type="term" value="F:metal ion binding"/>
    <property type="evidence" value="ECO:0007669"/>
    <property type="project" value="UniProtKB-KW"/>
</dbReference>
<dbReference type="GO" id="GO:0070040">
    <property type="term" value="F:rRNA (adenine(2503)-C2-)-methyltransferase activity"/>
    <property type="evidence" value="ECO:0007669"/>
    <property type="project" value="UniProtKB-UniRule"/>
</dbReference>
<dbReference type="GO" id="GO:0019843">
    <property type="term" value="F:rRNA binding"/>
    <property type="evidence" value="ECO:0007669"/>
    <property type="project" value="UniProtKB-UniRule"/>
</dbReference>
<dbReference type="GO" id="GO:0002935">
    <property type="term" value="F:tRNA (adenine(37)-C2)-methyltransferase activity"/>
    <property type="evidence" value="ECO:0007669"/>
    <property type="project" value="UniProtKB-UniRule"/>
</dbReference>
<dbReference type="GO" id="GO:0000049">
    <property type="term" value="F:tRNA binding"/>
    <property type="evidence" value="ECO:0007669"/>
    <property type="project" value="UniProtKB-UniRule"/>
</dbReference>
<dbReference type="GO" id="GO:0070475">
    <property type="term" value="P:rRNA base methylation"/>
    <property type="evidence" value="ECO:0007669"/>
    <property type="project" value="UniProtKB-UniRule"/>
</dbReference>
<dbReference type="GO" id="GO:0030488">
    <property type="term" value="P:tRNA methylation"/>
    <property type="evidence" value="ECO:0007669"/>
    <property type="project" value="UniProtKB-UniRule"/>
</dbReference>
<dbReference type="CDD" id="cd01335">
    <property type="entry name" value="Radical_SAM"/>
    <property type="match status" value="1"/>
</dbReference>
<dbReference type="FunFam" id="1.10.150.530:FF:000003">
    <property type="entry name" value="Dual-specificity RNA methyltransferase RlmN"/>
    <property type="match status" value="1"/>
</dbReference>
<dbReference type="FunFam" id="3.20.20.70:FF:000008">
    <property type="entry name" value="Dual-specificity RNA methyltransferase RlmN"/>
    <property type="match status" value="1"/>
</dbReference>
<dbReference type="Gene3D" id="1.10.150.530">
    <property type="match status" value="1"/>
</dbReference>
<dbReference type="Gene3D" id="3.20.20.70">
    <property type="entry name" value="Aldolase class I"/>
    <property type="match status" value="1"/>
</dbReference>
<dbReference type="HAMAP" id="MF_01849">
    <property type="entry name" value="RNA_methyltr_RlmN"/>
    <property type="match status" value="1"/>
</dbReference>
<dbReference type="InterPro" id="IPR013785">
    <property type="entry name" value="Aldolase_TIM"/>
</dbReference>
<dbReference type="InterPro" id="IPR040072">
    <property type="entry name" value="Methyltransferase_A"/>
</dbReference>
<dbReference type="InterPro" id="IPR048641">
    <property type="entry name" value="RlmN_N"/>
</dbReference>
<dbReference type="InterPro" id="IPR027492">
    <property type="entry name" value="RNA_MTrfase_RlmN"/>
</dbReference>
<dbReference type="InterPro" id="IPR004383">
    <property type="entry name" value="rRNA_lsu_MTrfase_RlmN/Cfr"/>
</dbReference>
<dbReference type="InterPro" id="IPR007197">
    <property type="entry name" value="rSAM"/>
</dbReference>
<dbReference type="NCBIfam" id="TIGR00048">
    <property type="entry name" value="rRNA_mod_RlmN"/>
    <property type="match status" value="1"/>
</dbReference>
<dbReference type="PANTHER" id="PTHR30544">
    <property type="entry name" value="23S RRNA METHYLTRANSFERASE"/>
    <property type="match status" value="1"/>
</dbReference>
<dbReference type="PANTHER" id="PTHR30544:SF5">
    <property type="entry name" value="RADICAL SAM CORE DOMAIN-CONTAINING PROTEIN"/>
    <property type="match status" value="1"/>
</dbReference>
<dbReference type="Pfam" id="PF04055">
    <property type="entry name" value="Radical_SAM"/>
    <property type="match status" value="1"/>
</dbReference>
<dbReference type="Pfam" id="PF21016">
    <property type="entry name" value="RlmN_N"/>
    <property type="match status" value="1"/>
</dbReference>
<dbReference type="PIRSF" id="PIRSF006004">
    <property type="entry name" value="CHP00048"/>
    <property type="match status" value="1"/>
</dbReference>
<dbReference type="SFLD" id="SFLDF00275">
    <property type="entry name" value="adenosine_C2_methyltransferase"/>
    <property type="match status" value="1"/>
</dbReference>
<dbReference type="SFLD" id="SFLDS00029">
    <property type="entry name" value="Radical_SAM"/>
    <property type="match status" value="1"/>
</dbReference>
<dbReference type="SUPFAM" id="SSF102114">
    <property type="entry name" value="Radical SAM enzymes"/>
    <property type="match status" value="1"/>
</dbReference>
<dbReference type="PROSITE" id="PS51918">
    <property type="entry name" value="RADICAL_SAM"/>
    <property type="match status" value="1"/>
</dbReference>
<comment type="function">
    <text evidence="1">Specifically methylates position 2 of adenine 2503 in 23S rRNA and position 2 of adenine 37 in tRNAs. m2A2503 modification seems to play a crucial role in the proofreading step occurring at the peptidyl transferase center and thus would serve to optimize ribosomal fidelity.</text>
</comment>
<comment type="catalytic activity">
    <reaction evidence="1">
        <text>adenosine(2503) in 23S rRNA + 2 reduced [2Fe-2S]-[ferredoxin] + 2 S-adenosyl-L-methionine = 2-methyladenosine(2503) in 23S rRNA + 5'-deoxyadenosine + L-methionine + 2 oxidized [2Fe-2S]-[ferredoxin] + S-adenosyl-L-homocysteine</text>
        <dbReference type="Rhea" id="RHEA:42916"/>
        <dbReference type="Rhea" id="RHEA-COMP:10000"/>
        <dbReference type="Rhea" id="RHEA-COMP:10001"/>
        <dbReference type="Rhea" id="RHEA-COMP:10152"/>
        <dbReference type="Rhea" id="RHEA-COMP:10282"/>
        <dbReference type="ChEBI" id="CHEBI:17319"/>
        <dbReference type="ChEBI" id="CHEBI:33737"/>
        <dbReference type="ChEBI" id="CHEBI:33738"/>
        <dbReference type="ChEBI" id="CHEBI:57844"/>
        <dbReference type="ChEBI" id="CHEBI:57856"/>
        <dbReference type="ChEBI" id="CHEBI:59789"/>
        <dbReference type="ChEBI" id="CHEBI:74411"/>
        <dbReference type="ChEBI" id="CHEBI:74497"/>
        <dbReference type="EC" id="2.1.1.192"/>
    </reaction>
</comment>
<comment type="catalytic activity">
    <reaction evidence="1">
        <text>adenosine(37) in tRNA + 2 reduced [2Fe-2S]-[ferredoxin] + 2 S-adenosyl-L-methionine = 2-methyladenosine(37) in tRNA + 5'-deoxyadenosine + L-methionine + 2 oxidized [2Fe-2S]-[ferredoxin] + S-adenosyl-L-homocysteine</text>
        <dbReference type="Rhea" id="RHEA:43332"/>
        <dbReference type="Rhea" id="RHEA-COMP:10000"/>
        <dbReference type="Rhea" id="RHEA-COMP:10001"/>
        <dbReference type="Rhea" id="RHEA-COMP:10162"/>
        <dbReference type="Rhea" id="RHEA-COMP:10485"/>
        <dbReference type="ChEBI" id="CHEBI:17319"/>
        <dbReference type="ChEBI" id="CHEBI:33737"/>
        <dbReference type="ChEBI" id="CHEBI:33738"/>
        <dbReference type="ChEBI" id="CHEBI:57844"/>
        <dbReference type="ChEBI" id="CHEBI:57856"/>
        <dbReference type="ChEBI" id="CHEBI:59789"/>
        <dbReference type="ChEBI" id="CHEBI:74411"/>
        <dbReference type="ChEBI" id="CHEBI:74497"/>
        <dbReference type="EC" id="2.1.1.192"/>
    </reaction>
</comment>
<comment type="cofactor">
    <cofactor evidence="1">
        <name>[4Fe-4S] cluster</name>
        <dbReference type="ChEBI" id="CHEBI:49883"/>
    </cofactor>
    <text evidence="1">Binds 1 [4Fe-4S] cluster. The cluster is coordinated with 3 cysteines and an exchangeable S-adenosyl-L-methionine.</text>
</comment>
<comment type="subcellular location">
    <subcellularLocation>
        <location evidence="1">Cytoplasm</location>
    </subcellularLocation>
</comment>
<comment type="miscellaneous">
    <text evidence="1">Reaction proceeds by a ping-pong mechanism involving intermediate methylation of a conserved cysteine residue.</text>
</comment>
<comment type="similarity">
    <text evidence="1">Belongs to the radical SAM superfamily. RlmN family.</text>
</comment>
<name>RLMN_CHRSD</name>
<keyword id="KW-0004">4Fe-4S</keyword>
<keyword id="KW-0963">Cytoplasm</keyword>
<keyword id="KW-1015">Disulfide bond</keyword>
<keyword id="KW-0408">Iron</keyword>
<keyword id="KW-0411">Iron-sulfur</keyword>
<keyword id="KW-0479">Metal-binding</keyword>
<keyword id="KW-0489">Methyltransferase</keyword>
<keyword id="KW-1185">Reference proteome</keyword>
<keyword id="KW-0698">rRNA processing</keyword>
<keyword id="KW-0949">S-adenosyl-L-methionine</keyword>
<keyword id="KW-0808">Transferase</keyword>
<keyword id="KW-0819">tRNA processing</keyword>
<reference key="1">
    <citation type="journal article" date="2011" name="Stand. Genomic Sci.">
        <title>Complete genome sequence of the halophilic and highly halotolerant Chromohalobacter salexigens type strain (1H11(T)).</title>
        <authorList>
            <person name="Copeland A."/>
            <person name="O'Connor K."/>
            <person name="Lucas S."/>
            <person name="Lapidus A."/>
            <person name="Berry K.W."/>
            <person name="Detter J.C."/>
            <person name="Del Rio T.G."/>
            <person name="Hammon N."/>
            <person name="Dalin E."/>
            <person name="Tice H."/>
            <person name="Pitluck S."/>
            <person name="Bruce D."/>
            <person name="Goodwin L."/>
            <person name="Han C."/>
            <person name="Tapia R."/>
            <person name="Saunders E."/>
            <person name="Schmutz J."/>
            <person name="Brettin T."/>
            <person name="Larimer F."/>
            <person name="Land M."/>
            <person name="Hauser L."/>
            <person name="Vargas C."/>
            <person name="Nieto J.J."/>
            <person name="Kyrpides N.C."/>
            <person name="Ivanova N."/>
            <person name="Goker M."/>
            <person name="Klenk H.P."/>
            <person name="Csonka L.N."/>
            <person name="Woyke T."/>
        </authorList>
    </citation>
    <scope>NUCLEOTIDE SEQUENCE [LARGE SCALE GENOMIC DNA]</scope>
    <source>
        <strain>ATCC BAA-138 / DSM 3043 / CIP 106854 / NCIMB 13768 / 1H11</strain>
    </source>
</reference>
<protein>
    <recommendedName>
        <fullName evidence="1">Dual-specificity RNA methyltransferase RlmN</fullName>
        <ecNumber evidence="1">2.1.1.192</ecNumber>
    </recommendedName>
    <alternativeName>
        <fullName evidence="1">23S rRNA (adenine(2503)-C(2))-methyltransferase</fullName>
    </alternativeName>
    <alternativeName>
        <fullName evidence="1">23S rRNA m2A2503 methyltransferase</fullName>
    </alternativeName>
    <alternativeName>
        <fullName evidence="1">Ribosomal RNA large subunit methyltransferase N</fullName>
    </alternativeName>
    <alternativeName>
        <fullName evidence="1">tRNA (adenine(37)-C(2))-methyltransferase</fullName>
    </alternativeName>
    <alternativeName>
        <fullName evidence="1">tRNA m2A37 methyltransferase</fullName>
    </alternativeName>
</protein>
<accession>Q1QTL1</accession>
<evidence type="ECO:0000255" key="1">
    <source>
        <dbReference type="HAMAP-Rule" id="MF_01849"/>
    </source>
</evidence>
<evidence type="ECO:0000255" key="2">
    <source>
        <dbReference type="PROSITE-ProRule" id="PRU01266"/>
    </source>
</evidence>
<proteinExistence type="inferred from homology"/>
<organism>
    <name type="scientific">Chromohalobacter salexigens (strain ATCC BAA-138 / DSM 3043 / CIP 106854 / NCIMB 13768 / 1H11)</name>
    <dbReference type="NCBI Taxonomy" id="290398"/>
    <lineage>
        <taxon>Bacteria</taxon>
        <taxon>Pseudomonadati</taxon>
        <taxon>Pseudomonadota</taxon>
        <taxon>Gammaproteobacteria</taxon>
        <taxon>Oceanospirillales</taxon>
        <taxon>Halomonadaceae</taxon>
        <taxon>Chromohalobacter</taxon>
    </lineage>
</organism>